<reference key="1">
    <citation type="journal article" date="2008" name="J. Bacteriol.">
        <title>Insights into the environmental resistance gene pool from the genome sequence of the multidrug-resistant environmental isolate Escherichia coli SMS-3-5.</title>
        <authorList>
            <person name="Fricke W.F."/>
            <person name="Wright M.S."/>
            <person name="Lindell A.H."/>
            <person name="Harkins D.M."/>
            <person name="Baker-Austin C."/>
            <person name="Ravel J."/>
            <person name="Stepanauskas R."/>
        </authorList>
    </citation>
    <scope>NUCLEOTIDE SEQUENCE [LARGE SCALE GENOMIC DNA]</scope>
    <source>
        <strain>SMS-3-5 / SECEC</strain>
    </source>
</reference>
<keyword id="KW-0963">Cytoplasm</keyword>
<keyword id="KW-0413">Isomerase</keyword>
<keyword id="KW-0414">Isoprene biosynthesis</keyword>
<keyword id="KW-0460">Magnesium</keyword>
<keyword id="KW-0464">Manganese</keyword>
<keyword id="KW-0479">Metal-binding</keyword>
<feature type="chain" id="PRO_1000118727" description="Isopentenyl-diphosphate Delta-isomerase">
    <location>
        <begin position="1"/>
        <end position="182"/>
    </location>
</feature>
<feature type="domain" description="Nudix hydrolase">
    <location>
        <begin position="30"/>
        <end position="164"/>
    </location>
</feature>
<feature type="active site" evidence="1">
    <location>
        <position position="67"/>
    </location>
</feature>
<feature type="active site" evidence="1">
    <location>
        <position position="116"/>
    </location>
</feature>
<feature type="binding site" evidence="1">
    <location>
        <position position="25"/>
    </location>
    <ligand>
        <name>Mn(2+)</name>
        <dbReference type="ChEBI" id="CHEBI:29035"/>
    </ligand>
</feature>
<feature type="binding site" evidence="1">
    <location>
        <position position="32"/>
    </location>
    <ligand>
        <name>Mn(2+)</name>
        <dbReference type="ChEBI" id="CHEBI:29035"/>
    </ligand>
</feature>
<feature type="binding site" evidence="1">
    <location>
        <position position="69"/>
    </location>
    <ligand>
        <name>Mn(2+)</name>
        <dbReference type="ChEBI" id="CHEBI:29035"/>
    </ligand>
</feature>
<feature type="binding site" evidence="1">
    <location>
        <position position="87"/>
    </location>
    <ligand>
        <name>Mg(2+)</name>
        <dbReference type="ChEBI" id="CHEBI:18420"/>
    </ligand>
</feature>
<feature type="binding site" evidence="1">
    <location>
        <position position="114"/>
    </location>
    <ligand>
        <name>Mn(2+)</name>
        <dbReference type="ChEBI" id="CHEBI:29035"/>
    </ligand>
</feature>
<feature type="binding site" evidence="1">
    <location>
        <position position="116"/>
    </location>
    <ligand>
        <name>Mn(2+)</name>
        <dbReference type="ChEBI" id="CHEBI:29035"/>
    </ligand>
</feature>
<proteinExistence type="inferred from homology"/>
<protein>
    <recommendedName>
        <fullName evidence="1">Isopentenyl-diphosphate Delta-isomerase</fullName>
        <shortName evidence="1">IPP isomerase</shortName>
        <ecNumber evidence="1">5.3.3.2</ecNumber>
    </recommendedName>
    <alternativeName>
        <fullName evidence="1">IPP:DMAPP isomerase</fullName>
    </alternativeName>
    <alternativeName>
        <fullName evidence="1">Isopentenyl pyrophosphate isomerase</fullName>
    </alternativeName>
</protein>
<sequence length="182" mass="20330">MQTEHVILLNAQGVPTGTLEKYAAHTADTLLHLAFSSWLFNAKGQLLVTRRALSKKAWPGVWTNSVCGHPQLGESNEDAVIRRCRYELGVEITPPESIYPDFRYRATDPNGIVENEVCPVFAARTTSALQINDDEVMDYQWCDLADVLHGIDATPWAFSPWMVMQAANSEARKLLSAFAQHN</sequence>
<gene>
    <name evidence="1" type="primary">idi</name>
    <name type="ordered locus">EcSMS35_3022</name>
</gene>
<organism>
    <name type="scientific">Escherichia coli (strain SMS-3-5 / SECEC)</name>
    <dbReference type="NCBI Taxonomy" id="439855"/>
    <lineage>
        <taxon>Bacteria</taxon>
        <taxon>Pseudomonadati</taxon>
        <taxon>Pseudomonadota</taxon>
        <taxon>Gammaproteobacteria</taxon>
        <taxon>Enterobacterales</taxon>
        <taxon>Enterobacteriaceae</taxon>
        <taxon>Escherichia</taxon>
    </lineage>
</organism>
<dbReference type="EC" id="5.3.3.2" evidence="1"/>
<dbReference type="EMBL" id="CP000970">
    <property type="protein sequence ID" value="ACB19902.1"/>
    <property type="molecule type" value="Genomic_DNA"/>
</dbReference>
<dbReference type="RefSeq" id="WP_001192793.1">
    <property type="nucleotide sequence ID" value="NC_010498.1"/>
</dbReference>
<dbReference type="SMR" id="B1LR71"/>
<dbReference type="KEGG" id="ecm:EcSMS35_3022"/>
<dbReference type="HOGENOM" id="CLU_060552_2_0_6"/>
<dbReference type="UniPathway" id="UPA00059">
    <property type="reaction ID" value="UER00104"/>
</dbReference>
<dbReference type="Proteomes" id="UP000007011">
    <property type="component" value="Chromosome"/>
</dbReference>
<dbReference type="GO" id="GO:0005737">
    <property type="term" value="C:cytoplasm"/>
    <property type="evidence" value="ECO:0007669"/>
    <property type="project" value="UniProtKB-SubCell"/>
</dbReference>
<dbReference type="GO" id="GO:0004452">
    <property type="term" value="F:isopentenyl-diphosphate delta-isomerase activity"/>
    <property type="evidence" value="ECO:0007669"/>
    <property type="project" value="UniProtKB-UniRule"/>
</dbReference>
<dbReference type="GO" id="GO:0046872">
    <property type="term" value="F:metal ion binding"/>
    <property type="evidence" value="ECO:0007669"/>
    <property type="project" value="UniProtKB-KW"/>
</dbReference>
<dbReference type="GO" id="GO:0050992">
    <property type="term" value="P:dimethylallyl diphosphate biosynthetic process"/>
    <property type="evidence" value="ECO:0007669"/>
    <property type="project" value="UniProtKB-UniRule"/>
</dbReference>
<dbReference type="GO" id="GO:0008299">
    <property type="term" value="P:isoprenoid biosynthetic process"/>
    <property type="evidence" value="ECO:0007669"/>
    <property type="project" value="UniProtKB-KW"/>
</dbReference>
<dbReference type="CDD" id="cd02885">
    <property type="entry name" value="NUDIX_IPP_Isomerase"/>
    <property type="match status" value="1"/>
</dbReference>
<dbReference type="FunFam" id="3.90.79.10:FF:000009">
    <property type="entry name" value="Isopentenyl-diphosphate Delta-isomerase"/>
    <property type="match status" value="1"/>
</dbReference>
<dbReference type="Gene3D" id="3.90.79.10">
    <property type="entry name" value="Nucleoside Triphosphate Pyrophosphohydrolase"/>
    <property type="match status" value="1"/>
</dbReference>
<dbReference type="HAMAP" id="MF_00202">
    <property type="entry name" value="Idi"/>
    <property type="match status" value="1"/>
</dbReference>
<dbReference type="InterPro" id="IPR056375">
    <property type="entry name" value="Idi_bact"/>
</dbReference>
<dbReference type="InterPro" id="IPR011876">
    <property type="entry name" value="IsopentenylPP_isomerase_typ1"/>
</dbReference>
<dbReference type="InterPro" id="IPR015797">
    <property type="entry name" value="NUDIX_hydrolase-like_dom_sf"/>
</dbReference>
<dbReference type="InterPro" id="IPR000086">
    <property type="entry name" value="NUDIX_hydrolase_dom"/>
</dbReference>
<dbReference type="NCBIfam" id="TIGR02150">
    <property type="entry name" value="IPP_isom_1"/>
    <property type="match status" value="1"/>
</dbReference>
<dbReference type="NCBIfam" id="NF002995">
    <property type="entry name" value="PRK03759.1"/>
    <property type="match status" value="1"/>
</dbReference>
<dbReference type="PANTHER" id="PTHR10885">
    <property type="entry name" value="ISOPENTENYL-DIPHOSPHATE DELTA-ISOMERASE"/>
    <property type="match status" value="1"/>
</dbReference>
<dbReference type="PANTHER" id="PTHR10885:SF0">
    <property type="entry name" value="ISOPENTENYL-DIPHOSPHATE DELTA-ISOMERASE"/>
    <property type="match status" value="1"/>
</dbReference>
<dbReference type="Pfam" id="PF00293">
    <property type="entry name" value="NUDIX"/>
    <property type="match status" value="1"/>
</dbReference>
<dbReference type="PIRSF" id="PIRSF018427">
    <property type="entry name" value="Isopntndiph_ism"/>
    <property type="match status" value="1"/>
</dbReference>
<dbReference type="SUPFAM" id="SSF55811">
    <property type="entry name" value="Nudix"/>
    <property type="match status" value="1"/>
</dbReference>
<dbReference type="PROSITE" id="PS51462">
    <property type="entry name" value="NUDIX"/>
    <property type="match status" value="1"/>
</dbReference>
<accession>B1LR71</accession>
<evidence type="ECO:0000255" key="1">
    <source>
        <dbReference type="HAMAP-Rule" id="MF_00202"/>
    </source>
</evidence>
<comment type="function">
    <text evidence="1">Catalyzes the 1,3-allylic rearrangement of the homoallylic substrate isopentenyl (IPP) to its highly electrophilic allylic isomer, dimethylallyl diphosphate (DMAPP).</text>
</comment>
<comment type="catalytic activity">
    <reaction evidence="1">
        <text>isopentenyl diphosphate = dimethylallyl diphosphate</text>
        <dbReference type="Rhea" id="RHEA:23284"/>
        <dbReference type="ChEBI" id="CHEBI:57623"/>
        <dbReference type="ChEBI" id="CHEBI:128769"/>
        <dbReference type="EC" id="5.3.3.2"/>
    </reaction>
</comment>
<comment type="cofactor">
    <cofactor evidence="1">
        <name>Mg(2+)</name>
        <dbReference type="ChEBI" id="CHEBI:18420"/>
    </cofactor>
    <text evidence="1">Binds 1 Mg(2+) ion per subunit. The magnesium ion binds only when substrate is bound.</text>
</comment>
<comment type="cofactor">
    <cofactor evidence="1">
        <name>Mn(2+)</name>
        <dbReference type="ChEBI" id="CHEBI:29035"/>
    </cofactor>
    <text evidence="1">Binds 1 Mn(2+) ion per subunit.</text>
</comment>
<comment type="pathway">
    <text evidence="1">Isoprenoid biosynthesis; dimethylallyl diphosphate biosynthesis; dimethylallyl diphosphate from isopentenyl diphosphate: step 1/1.</text>
</comment>
<comment type="subunit">
    <text evidence="1">Homodimer.</text>
</comment>
<comment type="subcellular location">
    <subcellularLocation>
        <location evidence="1">Cytoplasm</location>
    </subcellularLocation>
</comment>
<comment type="similarity">
    <text evidence="1">Belongs to the IPP isomerase type 1 family.</text>
</comment>
<name>IDI_ECOSM</name>